<accession>Q0BBS3</accession>
<gene>
    <name evidence="1" type="primary">apt</name>
    <name type="ordered locus">Bamb_2844</name>
</gene>
<evidence type="ECO:0000255" key="1">
    <source>
        <dbReference type="HAMAP-Rule" id="MF_00004"/>
    </source>
</evidence>
<reference key="1">
    <citation type="submission" date="2006-08" db="EMBL/GenBank/DDBJ databases">
        <title>Complete sequence of chromosome 1 of Burkholderia cepacia AMMD.</title>
        <authorList>
            <person name="Copeland A."/>
            <person name="Lucas S."/>
            <person name="Lapidus A."/>
            <person name="Barry K."/>
            <person name="Detter J.C."/>
            <person name="Glavina del Rio T."/>
            <person name="Hammon N."/>
            <person name="Israni S."/>
            <person name="Pitluck S."/>
            <person name="Bruce D."/>
            <person name="Chain P."/>
            <person name="Malfatti S."/>
            <person name="Shin M."/>
            <person name="Vergez L."/>
            <person name="Schmutz J."/>
            <person name="Larimer F."/>
            <person name="Land M."/>
            <person name="Hauser L."/>
            <person name="Kyrpides N."/>
            <person name="Kim E."/>
            <person name="Parke J."/>
            <person name="Coenye T."/>
            <person name="Konstantinidis K."/>
            <person name="Ramette A."/>
            <person name="Tiedje J."/>
            <person name="Richardson P."/>
        </authorList>
    </citation>
    <scope>NUCLEOTIDE SEQUENCE [LARGE SCALE GENOMIC DNA]</scope>
    <source>
        <strain>ATCC BAA-244 / DSM 16087 / CCUG 44356 / LMG 19182 / AMMD</strain>
    </source>
</reference>
<keyword id="KW-0963">Cytoplasm</keyword>
<keyword id="KW-0328">Glycosyltransferase</keyword>
<keyword id="KW-0660">Purine salvage</keyword>
<keyword id="KW-0808">Transferase</keyword>
<organism>
    <name type="scientific">Burkholderia ambifaria (strain ATCC BAA-244 / DSM 16087 / CCUG 44356 / LMG 19182 / AMMD)</name>
    <name type="common">Burkholderia cepacia (strain AMMD)</name>
    <dbReference type="NCBI Taxonomy" id="339670"/>
    <lineage>
        <taxon>Bacteria</taxon>
        <taxon>Pseudomonadati</taxon>
        <taxon>Pseudomonadota</taxon>
        <taxon>Betaproteobacteria</taxon>
        <taxon>Burkholderiales</taxon>
        <taxon>Burkholderiaceae</taxon>
        <taxon>Burkholderia</taxon>
        <taxon>Burkholderia cepacia complex</taxon>
    </lineage>
</organism>
<comment type="function">
    <text evidence="1">Catalyzes a salvage reaction resulting in the formation of AMP, that is energically less costly than de novo synthesis.</text>
</comment>
<comment type="catalytic activity">
    <reaction evidence="1">
        <text>AMP + diphosphate = 5-phospho-alpha-D-ribose 1-diphosphate + adenine</text>
        <dbReference type="Rhea" id="RHEA:16609"/>
        <dbReference type="ChEBI" id="CHEBI:16708"/>
        <dbReference type="ChEBI" id="CHEBI:33019"/>
        <dbReference type="ChEBI" id="CHEBI:58017"/>
        <dbReference type="ChEBI" id="CHEBI:456215"/>
        <dbReference type="EC" id="2.4.2.7"/>
    </reaction>
</comment>
<comment type="pathway">
    <text evidence="1">Purine metabolism; AMP biosynthesis via salvage pathway; AMP from adenine: step 1/1.</text>
</comment>
<comment type="subunit">
    <text evidence="1">Homodimer.</text>
</comment>
<comment type="subcellular location">
    <subcellularLocation>
        <location evidence="1">Cytoplasm</location>
    </subcellularLocation>
</comment>
<comment type="similarity">
    <text evidence="1">Belongs to the purine/pyrimidine phosphoribosyltransferase family.</text>
</comment>
<protein>
    <recommendedName>
        <fullName evidence="1">Adenine phosphoribosyltransferase</fullName>
        <shortName evidence="1">APRT</shortName>
        <ecNumber evidence="1">2.4.2.7</ecNumber>
    </recommendedName>
</protein>
<feature type="chain" id="PRO_0000321344" description="Adenine phosphoribosyltransferase">
    <location>
        <begin position="1"/>
        <end position="188"/>
    </location>
</feature>
<sequence length="188" mass="20399">MPHSSPGAPLDPVAFIHSQIRTVPDWPQPGVQFRDITTLLQSPKALRILVDLFVERYVDAKLDYVAGLDARGFIIAPIVAYELSVGFVPIRKVGKLPYKTRSESYDLEYGSATVEIHEDACRPGDRVIIMDDLIATGGTMMAGRNLLQRLGAVVVEGAAIIDLPDLGGSTLLRNAGLPVYTVTEFAGH</sequence>
<proteinExistence type="inferred from homology"/>
<dbReference type="EC" id="2.4.2.7" evidence="1"/>
<dbReference type="EMBL" id="CP000440">
    <property type="protein sequence ID" value="ABI88400.1"/>
    <property type="molecule type" value="Genomic_DNA"/>
</dbReference>
<dbReference type="RefSeq" id="WP_011657958.1">
    <property type="nucleotide sequence ID" value="NZ_CP009798.1"/>
</dbReference>
<dbReference type="SMR" id="Q0BBS3"/>
<dbReference type="KEGG" id="bam:Bamb_2844"/>
<dbReference type="PATRIC" id="fig|339670.21.peg.2043"/>
<dbReference type="eggNOG" id="COG0503">
    <property type="taxonomic scope" value="Bacteria"/>
</dbReference>
<dbReference type="UniPathway" id="UPA00588">
    <property type="reaction ID" value="UER00646"/>
</dbReference>
<dbReference type="Proteomes" id="UP000000662">
    <property type="component" value="Chromosome 1"/>
</dbReference>
<dbReference type="GO" id="GO:0005829">
    <property type="term" value="C:cytosol"/>
    <property type="evidence" value="ECO:0007669"/>
    <property type="project" value="TreeGrafter"/>
</dbReference>
<dbReference type="GO" id="GO:0003999">
    <property type="term" value="F:adenine phosphoribosyltransferase activity"/>
    <property type="evidence" value="ECO:0007669"/>
    <property type="project" value="UniProtKB-UniRule"/>
</dbReference>
<dbReference type="GO" id="GO:0006168">
    <property type="term" value="P:adenine salvage"/>
    <property type="evidence" value="ECO:0007669"/>
    <property type="project" value="InterPro"/>
</dbReference>
<dbReference type="GO" id="GO:0044209">
    <property type="term" value="P:AMP salvage"/>
    <property type="evidence" value="ECO:0007669"/>
    <property type="project" value="UniProtKB-UniRule"/>
</dbReference>
<dbReference type="GO" id="GO:0006166">
    <property type="term" value="P:purine ribonucleoside salvage"/>
    <property type="evidence" value="ECO:0007669"/>
    <property type="project" value="UniProtKB-KW"/>
</dbReference>
<dbReference type="CDD" id="cd06223">
    <property type="entry name" value="PRTases_typeI"/>
    <property type="match status" value="1"/>
</dbReference>
<dbReference type="FunFam" id="3.40.50.2020:FF:000021">
    <property type="entry name" value="Adenine phosphoribosyltransferase"/>
    <property type="match status" value="1"/>
</dbReference>
<dbReference type="Gene3D" id="3.40.50.2020">
    <property type="match status" value="1"/>
</dbReference>
<dbReference type="HAMAP" id="MF_00004">
    <property type="entry name" value="Aden_phosphoribosyltr"/>
    <property type="match status" value="1"/>
</dbReference>
<dbReference type="InterPro" id="IPR005764">
    <property type="entry name" value="Ade_phspho_trans"/>
</dbReference>
<dbReference type="InterPro" id="IPR050120">
    <property type="entry name" value="Adenine_PRTase"/>
</dbReference>
<dbReference type="InterPro" id="IPR000836">
    <property type="entry name" value="PRibTrfase_dom"/>
</dbReference>
<dbReference type="InterPro" id="IPR029057">
    <property type="entry name" value="PRTase-like"/>
</dbReference>
<dbReference type="NCBIfam" id="TIGR01090">
    <property type="entry name" value="apt"/>
    <property type="match status" value="1"/>
</dbReference>
<dbReference type="NCBIfam" id="NF002634">
    <property type="entry name" value="PRK02304.1-3"/>
    <property type="match status" value="1"/>
</dbReference>
<dbReference type="NCBIfam" id="NF002636">
    <property type="entry name" value="PRK02304.1-5"/>
    <property type="match status" value="1"/>
</dbReference>
<dbReference type="PANTHER" id="PTHR11776">
    <property type="entry name" value="ADENINE PHOSPHORIBOSYLTRANSFERASE"/>
    <property type="match status" value="1"/>
</dbReference>
<dbReference type="PANTHER" id="PTHR11776:SF7">
    <property type="entry name" value="PHOSPHORIBOSYLTRANSFERASE DOMAIN-CONTAINING PROTEIN"/>
    <property type="match status" value="1"/>
</dbReference>
<dbReference type="Pfam" id="PF00156">
    <property type="entry name" value="Pribosyltran"/>
    <property type="match status" value="1"/>
</dbReference>
<dbReference type="SUPFAM" id="SSF53271">
    <property type="entry name" value="PRTase-like"/>
    <property type="match status" value="1"/>
</dbReference>
<dbReference type="PROSITE" id="PS00103">
    <property type="entry name" value="PUR_PYR_PR_TRANSFER"/>
    <property type="match status" value="1"/>
</dbReference>
<name>APT_BURCM</name>